<name>RHAM_BURCH</name>
<proteinExistence type="inferred from homology"/>
<sequence length="104" mass="12281">METIAFRMHLHPGKRDEYRRRHDAIWPELADALRAAGISDYWIFLDDDTHHLFAVLKRPADHRIAQLAETDVMRRWWAYMADLMATGPDGRPVEKALEPMFHLE</sequence>
<organism>
    <name type="scientific">Burkholderia cenocepacia (strain HI2424)</name>
    <dbReference type="NCBI Taxonomy" id="331272"/>
    <lineage>
        <taxon>Bacteria</taxon>
        <taxon>Pseudomonadati</taxon>
        <taxon>Pseudomonadota</taxon>
        <taxon>Betaproteobacteria</taxon>
        <taxon>Burkholderiales</taxon>
        <taxon>Burkholderiaceae</taxon>
        <taxon>Burkholderia</taxon>
        <taxon>Burkholderia cepacia complex</taxon>
    </lineage>
</organism>
<evidence type="ECO:0000255" key="1">
    <source>
        <dbReference type="HAMAP-Rule" id="MF_01663"/>
    </source>
</evidence>
<feature type="chain" id="PRO_0000344558" description="L-rhamnose mutarotase">
    <location>
        <begin position="1"/>
        <end position="104"/>
    </location>
</feature>
<feature type="active site" description="Proton donor" evidence="1">
    <location>
        <position position="22"/>
    </location>
</feature>
<feature type="binding site" evidence="1">
    <location>
        <position position="18"/>
    </location>
    <ligand>
        <name>substrate</name>
    </ligand>
</feature>
<feature type="binding site" evidence="1">
    <location>
        <position position="41"/>
    </location>
    <ligand>
        <name>substrate</name>
    </ligand>
</feature>
<feature type="binding site" evidence="1">
    <location>
        <begin position="76"/>
        <end position="77"/>
    </location>
    <ligand>
        <name>substrate</name>
    </ligand>
</feature>
<gene>
    <name evidence="1" type="primary">rhaM</name>
    <name type="ordered locus">Bcen2424_6634</name>
</gene>
<keyword id="KW-0119">Carbohydrate metabolism</keyword>
<keyword id="KW-0963">Cytoplasm</keyword>
<keyword id="KW-0413">Isomerase</keyword>
<keyword id="KW-0684">Rhamnose metabolism</keyword>
<reference key="1">
    <citation type="submission" date="2006-08" db="EMBL/GenBank/DDBJ databases">
        <title>Complete sequence of chromosome 3 of Burkholderia cenocepacia HI2424.</title>
        <authorList>
            <person name="Copeland A."/>
            <person name="Lucas S."/>
            <person name="Lapidus A."/>
            <person name="Barry K."/>
            <person name="Detter J.C."/>
            <person name="Glavina del Rio T."/>
            <person name="Hammon N."/>
            <person name="Israni S."/>
            <person name="Pitluck S."/>
            <person name="Chain P."/>
            <person name="Malfatti S."/>
            <person name="Shin M."/>
            <person name="Vergez L."/>
            <person name="Schmutz J."/>
            <person name="Larimer F."/>
            <person name="Land M."/>
            <person name="Hauser L."/>
            <person name="Kyrpides N."/>
            <person name="Kim E."/>
            <person name="LiPuma J.J."/>
            <person name="Gonzalez C.F."/>
            <person name="Konstantinidis K."/>
            <person name="Tiedje J.M."/>
            <person name="Richardson P."/>
        </authorList>
    </citation>
    <scope>NUCLEOTIDE SEQUENCE [LARGE SCALE GENOMIC DNA]</scope>
    <source>
        <strain>HI2424</strain>
    </source>
</reference>
<dbReference type="EC" id="5.1.3.32" evidence="1"/>
<dbReference type="EMBL" id="CP000460">
    <property type="protein sequence ID" value="ABK13363.1"/>
    <property type="molecule type" value="Genomic_DNA"/>
</dbReference>
<dbReference type="RefSeq" id="WP_011549798.1">
    <property type="nucleotide sequence ID" value="NC_008544.1"/>
</dbReference>
<dbReference type="SMR" id="A0KDV0"/>
<dbReference type="KEGG" id="bch:Bcen2424_6634"/>
<dbReference type="HOGENOM" id="CLU_100689_2_0_4"/>
<dbReference type="UniPathway" id="UPA00125"/>
<dbReference type="GO" id="GO:0005737">
    <property type="term" value="C:cytoplasm"/>
    <property type="evidence" value="ECO:0007669"/>
    <property type="project" value="UniProtKB-SubCell"/>
</dbReference>
<dbReference type="GO" id="GO:0062192">
    <property type="term" value="F:L-rhamnose mutarotase activity"/>
    <property type="evidence" value="ECO:0007669"/>
    <property type="project" value="UniProtKB-EC"/>
</dbReference>
<dbReference type="GO" id="GO:0019301">
    <property type="term" value="P:rhamnose catabolic process"/>
    <property type="evidence" value="ECO:0007669"/>
    <property type="project" value="TreeGrafter"/>
</dbReference>
<dbReference type="Gene3D" id="3.30.70.100">
    <property type="match status" value="1"/>
</dbReference>
<dbReference type="HAMAP" id="MF_01663">
    <property type="entry name" value="L_rham_rotase"/>
    <property type="match status" value="1"/>
</dbReference>
<dbReference type="InterPro" id="IPR011008">
    <property type="entry name" value="Dimeric_a/b-barrel"/>
</dbReference>
<dbReference type="InterPro" id="IPR013448">
    <property type="entry name" value="L-rhamnose_mutarotase"/>
</dbReference>
<dbReference type="InterPro" id="IPR008000">
    <property type="entry name" value="Rham/fucose_mutarotase"/>
</dbReference>
<dbReference type="NCBIfam" id="TIGR02625">
    <property type="entry name" value="YiiL_rotase"/>
    <property type="match status" value="1"/>
</dbReference>
<dbReference type="PANTHER" id="PTHR34389">
    <property type="entry name" value="L-RHAMNOSE MUTAROTASE"/>
    <property type="match status" value="1"/>
</dbReference>
<dbReference type="PANTHER" id="PTHR34389:SF2">
    <property type="entry name" value="L-RHAMNOSE MUTAROTASE"/>
    <property type="match status" value="1"/>
</dbReference>
<dbReference type="Pfam" id="PF05336">
    <property type="entry name" value="rhaM"/>
    <property type="match status" value="1"/>
</dbReference>
<dbReference type="SUPFAM" id="SSF54909">
    <property type="entry name" value="Dimeric alpha+beta barrel"/>
    <property type="match status" value="1"/>
</dbReference>
<accession>A0KDV0</accession>
<comment type="function">
    <text evidence="1">Involved in the anomeric conversion of L-rhamnose.</text>
</comment>
<comment type="catalytic activity">
    <reaction evidence="1">
        <text>alpha-L-rhamnose = beta-L-rhamnose</text>
        <dbReference type="Rhea" id="RHEA:25584"/>
        <dbReference type="ChEBI" id="CHEBI:27586"/>
        <dbReference type="ChEBI" id="CHEBI:27907"/>
        <dbReference type="EC" id="5.1.3.32"/>
    </reaction>
</comment>
<comment type="pathway">
    <text evidence="1">Carbohydrate metabolism; L-rhamnose metabolism.</text>
</comment>
<comment type="subunit">
    <text evidence="1">Homodimer.</text>
</comment>
<comment type="subcellular location">
    <subcellularLocation>
        <location evidence="1">Cytoplasm</location>
    </subcellularLocation>
</comment>
<comment type="similarity">
    <text evidence="1">Belongs to the rhamnose mutarotase family.</text>
</comment>
<protein>
    <recommendedName>
        <fullName evidence="1">L-rhamnose mutarotase</fullName>
        <ecNumber evidence="1">5.1.3.32</ecNumber>
    </recommendedName>
    <alternativeName>
        <fullName evidence="1">Rhamnose 1-epimerase</fullName>
    </alternativeName>
    <alternativeName>
        <fullName evidence="1">Type-3 mutarotase</fullName>
    </alternativeName>
</protein>